<protein>
    <recommendedName>
        <fullName evidence="1">UPF0370 protein YPTB2777</fullName>
    </recommendedName>
</protein>
<gene>
    <name type="ordered locus">YPTB2777</name>
</gene>
<organism>
    <name type="scientific">Yersinia pseudotuberculosis serotype I (strain IP32953)</name>
    <dbReference type="NCBI Taxonomy" id="273123"/>
    <lineage>
        <taxon>Bacteria</taxon>
        <taxon>Pseudomonadati</taxon>
        <taxon>Pseudomonadota</taxon>
        <taxon>Gammaproteobacteria</taxon>
        <taxon>Enterobacterales</taxon>
        <taxon>Yersiniaceae</taxon>
        <taxon>Yersinia</taxon>
    </lineage>
</organism>
<feature type="chain" id="PRO_0000244556" description="UPF0370 protein YPTB2777">
    <location>
        <begin position="1"/>
        <end position="64"/>
    </location>
</feature>
<feature type="transmembrane region" description="Helical" evidence="1">
    <location>
        <begin position="3"/>
        <end position="23"/>
    </location>
</feature>
<feature type="region of interest" description="Disordered" evidence="2">
    <location>
        <begin position="36"/>
        <end position="64"/>
    </location>
</feature>
<feature type="compositionally biased region" description="Basic and acidic residues" evidence="2">
    <location>
        <begin position="36"/>
        <end position="47"/>
    </location>
</feature>
<proteinExistence type="inferred from homology"/>
<name>Y2777_YERPS</name>
<sequence>MQWLADYWWIILILLVGMILNGIKELRRLDHKRFLDNKPELPPHRDNNAQWDDEDDWPDQNKKK</sequence>
<dbReference type="EMBL" id="BX936398">
    <property type="protein sequence ID" value="CAH22015.1"/>
    <property type="status" value="ALT_INIT"/>
    <property type="molecule type" value="Genomic_DNA"/>
</dbReference>
<dbReference type="RefSeq" id="WP_002208551.1">
    <property type="nucleotide sequence ID" value="NZ_CP009712.1"/>
</dbReference>
<dbReference type="SMR" id="Q668G3"/>
<dbReference type="KEGG" id="ypo:BZ17_3853"/>
<dbReference type="KEGG" id="yps:YPTB2777"/>
<dbReference type="PATRIC" id="fig|273123.14.peg.4044"/>
<dbReference type="Proteomes" id="UP000001011">
    <property type="component" value="Chromosome"/>
</dbReference>
<dbReference type="GO" id="GO:0005886">
    <property type="term" value="C:plasma membrane"/>
    <property type="evidence" value="ECO:0007669"/>
    <property type="project" value="UniProtKB-SubCell"/>
</dbReference>
<dbReference type="HAMAP" id="MF_01566">
    <property type="entry name" value="UPF0370"/>
    <property type="match status" value="1"/>
</dbReference>
<dbReference type="InterPro" id="IPR020910">
    <property type="entry name" value="UPF0370"/>
</dbReference>
<dbReference type="NCBIfam" id="NF010185">
    <property type="entry name" value="PRK13664.1"/>
    <property type="match status" value="1"/>
</dbReference>
<dbReference type="Pfam" id="PF13980">
    <property type="entry name" value="UPF0370"/>
    <property type="match status" value="1"/>
</dbReference>
<reference key="1">
    <citation type="journal article" date="2004" name="Proc. Natl. Acad. Sci. U.S.A.">
        <title>Insights into the evolution of Yersinia pestis through whole-genome comparison with Yersinia pseudotuberculosis.</title>
        <authorList>
            <person name="Chain P.S.G."/>
            <person name="Carniel E."/>
            <person name="Larimer F.W."/>
            <person name="Lamerdin J."/>
            <person name="Stoutland P.O."/>
            <person name="Regala W.M."/>
            <person name="Georgescu A.M."/>
            <person name="Vergez L.M."/>
            <person name="Land M.L."/>
            <person name="Motin V.L."/>
            <person name="Brubaker R.R."/>
            <person name="Fowler J."/>
            <person name="Hinnebusch J."/>
            <person name="Marceau M."/>
            <person name="Medigue C."/>
            <person name="Simonet M."/>
            <person name="Chenal-Francisque V."/>
            <person name="Souza B."/>
            <person name="Dacheux D."/>
            <person name="Elliott J.M."/>
            <person name="Derbise A."/>
            <person name="Hauser L.J."/>
            <person name="Garcia E."/>
        </authorList>
    </citation>
    <scope>NUCLEOTIDE SEQUENCE [LARGE SCALE GENOMIC DNA]</scope>
    <source>
        <strain>IP32953</strain>
    </source>
</reference>
<accession>Q668G3</accession>
<keyword id="KW-1003">Cell membrane</keyword>
<keyword id="KW-0472">Membrane</keyword>
<keyword id="KW-0812">Transmembrane</keyword>
<keyword id="KW-1133">Transmembrane helix</keyword>
<evidence type="ECO:0000255" key="1">
    <source>
        <dbReference type="HAMAP-Rule" id="MF_01566"/>
    </source>
</evidence>
<evidence type="ECO:0000256" key="2">
    <source>
        <dbReference type="SAM" id="MobiDB-lite"/>
    </source>
</evidence>
<evidence type="ECO:0000305" key="3"/>
<comment type="subcellular location">
    <subcellularLocation>
        <location evidence="1">Cell membrane</location>
        <topology evidence="1">Single-pass membrane protein</topology>
    </subcellularLocation>
</comment>
<comment type="similarity">
    <text evidence="1">Belongs to the UPF0370 family.</text>
</comment>
<comment type="sequence caution" evidence="3">
    <conflict type="erroneous initiation">
        <sequence resource="EMBL-CDS" id="CAH22015"/>
    </conflict>
</comment>